<organism>
    <name type="scientific">Akkermansia muciniphila (strain ATCC BAA-835 / DSM 22959 / JCM 33894 / BCRC 81048 / CCUG 64013 / CIP 107961 / Muc)</name>
    <dbReference type="NCBI Taxonomy" id="349741"/>
    <lineage>
        <taxon>Bacteria</taxon>
        <taxon>Pseudomonadati</taxon>
        <taxon>Verrucomicrobiota</taxon>
        <taxon>Verrucomicrobiia</taxon>
        <taxon>Verrucomicrobiales</taxon>
        <taxon>Akkermansiaceae</taxon>
        <taxon>Akkermansia</taxon>
    </lineage>
</organism>
<reference key="1">
    <citation type="journal article" date="2011" name="PLoS ONE">
        <title>The genome of Akkermansia muciniphila, a dedicated intestinal mucin degrader, and its use in exploring intestinal metagenomes.</title>
        <authorList>
            <person name="van Passel M.W."/>
            <person name="Kant R."/>
            <person name="Zoetendal E.G."/>
            <person name="Plugge C.M."/>
            <person name="Derrien M."/>
            <person name="Malfatti S.A."/>
            <person name="Chain P.S."/>
            <person name="Woyke T."/>
            <person name="Palva A."/>
            <person name="de Vos W.M."/>
            <person name="Smidt H."/>
        </authorList>
    </citation>
    <scope>NUCLEOTIDE SEQUENCE [LARGE SCALE GENOMIC DNA]</scope>
    <source>
        <strain>ATCC BAA-835 / DSM 22959 / JCM 33894 / BCRC 81048 / CCUG 64013 / CIP 107961 / Muc</strain>
    </source>
</reference>
<feature type="chain" id="PRO_1000090702" description="Ribosome-recycling factor">
    <location>
        <begin position="1"/>
        <end position="188"/>
    </location>
</feature>
<proteinExistence type="inferred from homology"/>
<comment type="function">
    <text evidence="1">Responsible for the release of ribosomes from messenger RNA at the termination of protein biosynthesis. May increase the efficiency of translation by recycling ribosomes from one round of translation to another.</text>
</comment>
<comment type="subcellular location">
    <subcellularLocation>
        <location evidence="1">Cytoplasm</location>
    </subcellularLocation>
</comment>
<comment type="similarity">
    <text evidence="1">Belongs to the RRF family.</text>
</comment>
<evidence type="ECO:0000255" key="1">
    <source>
        <dbReference type="HAMAP-Rule" id="MF_00040"/>
    </source>
</evidence>
<dbReference type="EMBL" id="CP001071">
    <property type="protein sequence ID" value="ACD05142.1"/>
    <property type="molecule type" value="Genomic_DNA"/>
</dbReference>
<dbReference type="RefSeq" id="WP_012420357.1">
    <property type="nucleotide sequence ID" value="NZ_CP071807.1"/>
</dbReference>
<dbReference type="SMR" id="B2UKL9"/>
<dbReference type="STRING" id="349741.Amuc_1318"/>
<dbReference type="PaxDb" id="349741-Amuc_1318"/>
<dbReference type="GeneID" id="60880842"/>
<dbReference type="KEGG" id="amu:Amuc_1318"/>
<dbReference type="eggNOG" id="COG0233">
    <property type="taxonomic scope" value="Bacteria"/>
</dbReference>
<dbReference type="HOGENOM" id="CLU_073981_2_0_0"/>
<dbReference type="OrthoDB" id="9804006at2"/>
<dbReference type="BioCyc" id="AMUC349741:G1GBX-1407-MONOMER"/>
<dbReference type="Proteomes" id="UP000001031">
    <property type="component" value="Chromosome"/>
</dbReference>
<dbReference type="GO" id="GO:0005737">
    <property type="term" value="C:cytoplasm"/>
    <property type="evidence" value="ECO:0007669"/>
    <property type="project" value="UniProtKB-SubCell"/>
</dbReference>
<dbReference type="GO" id="GO:0043023">
    <property type="term" value="F:ribosomal large subunit binding"/>
    <property type="evidence" value="ECO:0007669"/>
    <property type="project" value="TreeGrafter"/>
</dbReference>
<dbReference type="GO" id="GO:0006415">
    <property type="term" value="P:translational termination"/>
    <property type="evidence" value="ECO:0007669"/>
    <property type="project" value="UniProtKB-UniRule"/>
</dbReference>
<dbReference type="CDD" id="cd00520">
    <property type="entry name" value="RRF"/>
    <property type="match status" value="1"/>
</dbReference>
<dbReference type="FunFam" id="1.10.132.20:FF:000001">
    <property type="entry name" value="Ribosome-recycling factor"/>
    <property type="match status" value="1"/>
</dbReference>
<dbReference type="FunFam" id="3.30.1360.40:FF:000001">
    <property type="entry name" value="Ribosome-recycling factor"/>
    <property type="match status" value="1"/>
</dbReference>
<dbReference type="Gene3D" id="3.30.1360.40">
    <property type="match status" value="1"/>
</dbReference>
<dbReference type="Gene3D" id="1.10.132.20">
    <property type="entry name" value="Ribosome-recycling factor"/>
    <property type="match status" value="1"/>
</dbReference>
<dbReference type="HAMAP" id="MF_00040">
    <property type="entry name" value="RRF"/>
    <property type="match status" value="1"/>
</dbReference>
<dbReference type="InterPro" id="IPR002661">
    <property type="entry name" value="Ribosome_recyc_fac"/>
</dbReference>
<dbReference type="InterPro" id="IPR023584">
    <property type="entry name" value="Ribosome_recyc_fac_dom"/>
</dbReference>
<dbReference type="InterPro" id="IPR036191">
    <property type="entry name" value="RRF_sf"/>
</dbReference>
<dbReference type="NCBIfam" id="TIGR00496">
    <property type="entry name" value="frr"/>
    <property type="match status" value="1"/>
</dbReference>
<dbReference type="PANTHER" id="PTHR20982:SF3">
    <property type="entry name" value="MITOCHONDRIAL RIBOSOME RECYCLING FACTOR PSEUDO 1"/>
    <property type="match status" value="1"/>
</dbReference>
<dbReference type="PANTHER" id="PTHR20982">
    <property type="entry name" value="RIBOSOME RECYCLING FACTOR"/>
    <property type="match status" value="1"/>
</dbReference>
<dbReference type="Pfam" id="PF01765">
    <property type="entry name" value="RRF"/>
    <property type="match status" value="1"/>
</dbReference>
<dbReference type="SUPFAM" id="SSF55194">
    <property type="entry name" value="Ribosome recycling factor, RRF"/>
    <property type="match status" value="1"/>
</dbReference>
<protein>
    <recommendedName>
        <fullName evidence="1">Ribosome-recycling factor</fullName>
        <shortName evidence="1">RRF</shortName>
    </recommendedName>
    <alternativeName>
        <fullName evidence="1">Ribosome-releasing factor</fullName>
    </alternativeName>
</protein>
<sequence>MDAETLLLETEESMLKAVDFAKQEFSGVRTGKASPGLVENLDVHVSSYGSVMKLKGLAVISTPEPRLILIQPFDPSTVHDIGRAINESKLNLNPLVEGRSIRLPIPALTEERRKDLVKLVKSQAEEARVRVRGARKAAMDSAKKLKAENIVTEDGQRDLETQIQKLTDKYVKEIDELVAVKEKDIMTI</sequence>
<gene>
    <name evidence="1" type="primary">frr</name>
    <name type="ordered locus">Amuc_1318</name>
</gene>
<name>RRF_AKKM8</name>
<keyword id="KW-0963">Cytoplasm</keyword>
<keyword id="KW-0648">Protein biosynthesis</keyword>
<keyword id="KW-1185">Reference proteome</keyword>
<accession>B2UKL9</accession>